<keyword id="KW-0274">FAD</keyword>
<keyword id="KW-0285">Flavoprotein</keyword>
<keyword id="KW-0472">Membrane</keyword>
<keyword id="KW-0496">Mitochondrion</keyword>
<keyword id="KW-1000">Mitochondrion outer membrane</keyword>
<keyword id="KW-0503">Monooxygenase</keyword>
<keyword id="KW-0521">NADP</keyword>
<keyword id="KW-0560">Oxidoreductase</keyword>
<keyword id="KW-0662">Pyridine nucleotide biosynthesis</keyword>
<keyword id="KW-1185">Reference proteome</keyword>
<accession>A2QPD9</accession>
<name>KMO3_ASPNC</name>
<feature type="chain" id="PRO_0000361921" description="Kynurenine 3-monooxygenase 3">
    <location>
        <begin position="1"/>
        <end position="499"/>
    </location>
</feature>
<evidence type="ECO:0000255" key="1">
    <source>
        <dbReference type="HAMAP-Rule" id="MF_03018"/>
    </source>
</evidence>
<protein>
    <recommendedName>
        <fullName evidence="1">Kynurenine 3-monooxygenase 3</fullName>
        <ecNumber evidence="1">1.14.13.9</ecNumber>
    </recommendedName>
    <alternativeName>
        <fullName evidence="1">Biosynthesis of nicotinic acid protein 4-3</fullName>
    </alternativeName>
    <alternativeName>
        <fullName evidence="1">Kynurenine 3-hydroxylase 3</fullName>
    </alternativeName>
</protein>
<sequence>MAEPSAGRQKVVIVGAGPVGSLAALYAAARGDDVEMYELRGDLRDPNTIPLNFTKSINLALSERGITAMRQANREELIDRVLADAIPMHGRMIHGRSDGKLWEAAQTYDVHGRAINAVDRGTLNNALLDELSRTPNVKMFFNHKLTGADFRTNRAWLERRTPGTASTPESVTEIEITFDYLIGADGAHSASRYHMMKFARVDYQQEYIDALWCEFRIPPSPETGDFQISPNHLHIWPGKEFMFIALPSADKSFTCTLFAPAWHYEKLEKSSPQDLVTSFDYNFPGVCPNLITPEALAEQFTENPHLPLISLKCKPHHFGSSVVIVGDAAHAVLPFYGQGLNAGLEDIPVLFSFMDQYGVYDDSISPTPEARASARAAALQAYTNQRTADTWAINDLSKQNYLEMRWGVKSPVYKLRKMVEETLDHYVPSLGWQTQYSRVSFSNQRYSEVIASVKRQGKLLGVAGLSSVLVSVMIGAGVLMRWPERLSLGAVWRTVFGRN</sequence>
<dbReference type="EC" id="1.14.13.9" evidence="1"/>
<dbReference type="EMBL" id="AM270148">
    <property type="protein sequence ID" value="CAK45119.1"/>
    <property type="molecule type" value="Genomic_DNA"/>
</dbReference>
<dbReference type="RefSeq" id="XP_001391985.1">
    <property type="nucleotide sequence ID" value="XM_001391948.1"/>
</dbReference>
<dbReference type="SMR" id="A2QPD9"/>
<dbReference type="EnsemblFungi" id="CAK45119">
    <property type="protein sequence ID" value="CAK45119"/>
    <property type="gene ID" value="An07g09110"/>
</dbReference>
<dbReference type="GeneID" id="4982179"/>
<dbReference type="KEGG" id="ang:An07g09110"/>
<dbReference type="VEuPathDB" id="FungiDB:An07g09110"/>
<dbReference type="HOGENOM" id="CLU_023210_2_1_1"/>
<dbReference type="UniPathway" id="UPA00253">
    <property type="reaction ID" value="UER00328"/>
</dbReference>
<dbReference type="Proteomes" id="UP000006706">
    <property type="component" value="Chromosome 4L"/>
</dbReference>
<dbReference type="GO" id="GO:0005741">
    <property type="term" value="C:mitochondrial outer membrane"/>
    <property type="evidence" value="ECO:0007669"/>
    <property type="project" value="UniProtKB-SubCell"/>
</dbReference>
<dbReference type="GO" id="GO:0071949">
    <property type="term" value="F:FAD binding"/>
    <property type="evidence" value="ECO:0007669"/>
    <property type="project" value="InterPro"/>
</dbReference>
<dbReference type="GO" id="GO:0004502">
    <property type="term" value="F:kynurenine 3-monooxygenase activity"/>
    <property type="evidence" value="ECO:0007669"/>
    <property type="project" value="UniProtKB-UniRule"/>
</dbReference>
<dbReference type="GO" id="GO:0034354">
    <property type="term" value="P:'de novo' NAD biosynthetic process from L-tryptophan"/>
    <property type="evidence" value="ECO:0007669"/>
    <property type="project" value="UniProtKB-UniRule"/>
</dbReference>
<dbReference type="GO" id="GO:0043420">
    <property type="term" value="P:anthranilate metabolic process"/>
    <property type="evidence" value="ECO:0007669"/>
    <property type="project" value="UniProtKB-UniRule"/>
</dbReference>
<dbReference type="GO" id="GO:0070189">
    <property type="term" value="P:kynurenine metabolic process"/>
    <property type="evidence" value="ECO:0007669"/>
    <property type="project" value="TreeGrafter"/>
</dbReference>
<dbReference type="GO" id="GO:0006569">
    <property type="term" value="P:L-tryptophan catabolic process"/>
    <property type="evidence" value="ECO:0007669"/>
    <property type="project" value="UniProtKB-UniRule"/>
</dbReference>
<dbReference type="GO" id="GO:0019805">
    <property type="term" value="P:quinolinate biosynthetic process"/>
    <property type="evidence" value="ECO:0007669"/>
    <property type="project" value="UniProtKB-UniRule"/>
</dbReference>
<dbReference type="FunFam" id="3.50.50.60:FF:000129">
    <property type="entry name" value="Kynurenine 3-monooxygenase"/>
    <property type="match status" value="1"/>
</dbReference>
<dbReference type="Gene3D" id="3.50.50.60">
    <property type="entry name" value="FAD/NAD(P)-binding domain"/>
    <property type="match status" value="1"/>
</dbReference>
<dbReference type="HAMAP" id="MF_01971">
    <property type="entry name" value="Kynurenine_monooxygenase"/>
    <property type="match status" value="1"/>
</dbReference>
<dbReference type="InterPro" id="IPR002938">
    <property type="entry name" value="FAD-bd"/>
</dbReference>
<dbReference type="InterPro" id="IPR036188">
    <property type="entry name" value="FAD/NAD-bd_sf"/>
</dbReference>
<dbReference type="InterPro" id="IPR027545">
    <property type="entry name" value="Kynurenine_monooxygenase"/>
</dbReference>
<dbReference type="PANTHER" id="PTHR46028">
    <property type="entry name" value="KYNURENINE 3-MONOOXYGENASE"/>
    <property type="match status" value="1"/>
</dbReference>
<dbReference type="PANTHER" id="PTHR46028:SF2">
    <property type="entry name" value="KYNURENINE 3-MONOOXYGENASE"/>
    <property type="match status" value="1"/>
</dbReference>
<dbReference type="Pfam" id="PF01494">
    <property type="entry name" value="FAD_binding_3"/>
    <property type="match status" value="1"/>
</dbReference>
<dbReference type="PRINTS" id="PR00420">
    <property type="entry name" value="RNGMNOXGNASE"/>
</dbReference>
<dbReference type="SUPFAM" id="SSF51905">
    <property type="entry name" value="FAD/NAD(P)-binding domain"/>
    <property type="match status" value="1"/>
</dbReference>
<gene>
    <name type="primary">bna4-3</name>
    <name type="ORF">An07g09110</name>
</gene>
<reference key="1">
    <citation type="journal article" date="2007" name="Nat. Biotechnol.">
        <title>Genome sequencing and analysis of the versatile cell factory Aspergillus niger CBS 513.88.</title>
        <authorList>
            <person name="Pel H.J."/>
            <person name="de Winde J.H."/>
            <person name="Archer D.B."/>
            <person name="Dyer P.S."/>
            <person name="Hofmann G."/>
            <person name="Schaap P.J."/>
            <person name="Turner G."/>
            <person name="de Vries R.P."/>
            <person name="Albang R."/>
            <person name="Albermann K."/>
            <person name="Andersen M.R."/>
            <person name="Bendtsen J.D."/>
            <person name="Benen J.A.E."/>
            <person name="van den Berg M."/>
            <person name="Breestraat S."/>
            <person name="Caddick M.X."/>
            <person name="Contreras R."/>
            <person name="Cornell M."/>
            <person name="Coutinho P.M."/>
            <person name="Danchin E.G.J."/>
            <person name="Debets A.J.M."/>
            <person name="Dekker P."/>
            <person name="van Dijck P.W.M."/>
            <person name="van Dijk A."/>
            <person name="Dijkhuizen L."/>
            <person name="Driessen A.J.M."/>
            <person name="d'Enfert C."/>
            <person name="Geysens S."/>
            <person name="Goosen C."/>
            <person name="Groot G.S.P."/>
            <person name="de Groot P.W.J."/>
            <person name="Guillemette T."/>
            <person name="Henrissat B."/>
            <person name="Herweijer M."/>
            <person name="van den Hombergh J.P.T.W."/>
            <person name="van den Hondel C.A.M.J.J."/>
            <person name="van der Heijden R.T.J.M."/>
            <person name="van der Kaaij R.M."/>
            <person name="Klis F.M."/>
            <person name="Kools H.J."/>
            <person name="Kubicek C.P."/>
            <person name="van Kuyk P.A."/>
            <person name="Lauber J."/>
            <person name="Lu X."/>
            <person name="van der Maarel M.J.E.C."/>
            <person name="Meulenberg R."/>
            <person name="Menke H."/>
            <person name="Mortimer M.A."/>
            <person name="Nielsen J."/>
            <person name="Oliver S.G."/>
            <person name="Olsthoorn M."/>
            <person name="Pal K."/>
            <person name="van Peij N.N.M.E."/>
            <person name="Ram A.F.J."/>
            <person name="Rinas U."/>
            <person name="Roubos J.A."/>
            <person name="Sagt C.M.J."/>
            <person name="Schmoll M."/>
            <person name="Sun J."/>
            <person name="Ussery D."/>
            <person name="Varga J."/>
            <person name="Vervecken W."/>
            <person name="van de Vondervoort P.J.J."/>
            <person name="Wedler H."/>
            <person name="Woesten H.A.B."/>
            <person name="Zeng A.-P."/>
            <person name="van Ooyen A.J.J."/>
            <person name="Visser J."/>
            <person name="Stam H."/>
        </authorList>
    </citation>
    <scope>NUCLEOTIDE SEQUENCE [LARGE SCALE GENOMIC DNA]</scope>
    <source>
        <strain>ATCC MYA-4892 / CBS 513.88 / FGSC A1513</strain>
    </source>
</reference>
<comment type="function">
    <text evidence="1">Catalyzes the hydroxylation of L-kynurenine (L-Kyn) to form 3-hydroxy-L-kynurenine (L-3OHKyn). Required for synthesis of quinolinic acid.</text>
</comment>
<comment type="catalytic activity">
    <reaction evidence="1">
        <text>L-kynurenine + NADPH + O2 + H(+) = 3-hydroxy-L-kynurenine + NADP(+) + H2O</text>
        <dbReference type="Rhea" id="RHEA:20545"/>
        <dbReference type="ChEBI" id="CHEBI:15377"/>
        <dbReference type="ChEBI" id="CHEBI:15378"/>
        <dbReference type="ChEBI" id="CHEBI:15379"/>
        <dbReference type="ChEBI" id="CHEBI:57783"/>
        <dbReference type="ChEBI" id="CHEBI:57959"/>
        <dbReference type="ChEBI" id="CHEBI:58125"/>
        <dbReference type="ChEBI" id="CHEBI:58349"/>
        <dbReference type="EC" id="1.14.13.9"/>
    </reaction>
</comment>
<comment type="cofactor">
    <cofactor evidence="1">
        <name>FAD</name>
        <dbReference type="ChEBI" id="CHEBI:57692"/>
    </cofactor>
</comment>
<comment type="pathway">
    <text evidence="1">Cofactor biosynthesis; NAD(+) biosynthesis; quinolinate from L-kynurenine: step 1/3.</text>
</comment>
<comment type="subcellular location">
    <subcellularLocation>
        <location evidence="1">Mitochondrion outer membrane</location>
    </subcellularLocation>
</comment>
<comment type="similarity">
    <text evidence="1">Belongs to the aromatic-ring hydroxylase family. KMO subfamily.</text>
</comment>
<organism>
    <name type="scientific">Aspergillus niger (strain ATCC MYA-4892 / CBS 513.88 / FGSC A1513)</name>
    <dbReference type="NCBI Taxonomy" id="425011"/>
    <lineage>
        <taxon>Eukaryota</taxon>
        <taxon>Fungi</taxon>
        <taxon>Dikarya</taxon>
        <taxon>Ascomycota</taxon>
        <taxon>Pezizomycotina</taxon>
        <taxon>Eurotiomycetes</taxon>
        <taxon>Eurotiomycetidae</taxon>
        <taxon>Eurotiales</taxon>
        <taxon>Aspergillaceae</taxon>
        <taxon>Aspergillus</taxon>
        <taxon>Aspergillus subgen. Circumdati</taxon>
    </lineage>
</organism>
<proteinExistence type="inferred from homology"/>